<organism>
    <name type="scientific">Leptospira interrogans serogroup Icterohaemorrhagiae serovar copenhageni (strain Fiocruz L1-130)</name>
    <dbReference type="NCBI Taxonomy" id="267671"/>
    <lineage>
        <taxon>Bacteria</taxon>
        <taxon>Pseudomonadati</taxon>
        <taxon>Spirochaetota</taxon>
        <taxon>Spirochaetia</taxon>
        <taxon>Leptospirales</taxon>
        <taxon>Leptospiraceae</taxon>
        <taxon>Leptospira</taxon>
    </lineage>
</organism>
<reference key="1">
    <citation type="journal article" date="2004" name="J. Bacteriol.">
        <title>Comparative genomics of two Leptospira interrogans serovars reveals novel insights into physiology and pathogenesis.</title>
        <authorList>
            <person name="Nascimento A.L.T.O."/>
            <person name="Ko A.I."/>
            <person name="Martins E.A.L."/>
            <person name="Monteiro-Vitorello C.B."/>
            <person name="Ho P.L."/>
            <person name="Haake D.A."/>
            <person name="Verjovski-Almeida S."/>
            <person name="Hartskeerl R.A."/>
            <person name="Marques M.V."/>
            <person name="Oliveira M.C."/>
            <person name="Menck C.F.M."/>
            <person name="Leite L.C.C."/>
            <person name="Carrer H."/>
            <person name="Coutinho L.L."/>
            <person name="Degrave W.M."/>
            <person name="Dellagostin O.A."/>
            <person name="El-Dorry H."/>
            <person name="Ferro E.S."/>
            <person name="Ferro M.I.T."/>
            <person name="Furlan L.R."/>
            <person name="Gamberini M."/>
            <person name="Giglioti E.A."/>
            <person name="Goes-Neto A."/>
            <person name="Goldman G.H."/>
            <person name="Goldman M.H.S."/>
            <person name="Harakava R."/>
            <person name="Jeronimo S.M.B."/>
            <person name="Junqueira-de-Azevedo I.L.M."/>
            <person name="Kimura E.T."/>
            <person name="Kuramae E.E."/>
            <person name="Lemos E.G.M."/>
            <person name="Lemos M.V.F."/>
            <person name="Marino C.L."/>
            <person name="Nunes L.R."/>
            <person name="de Oliveira R.C."/>
            <person name="Pereira G.G."/>
            <person name="Reis M.S."/>
            <person name="Schriefer A."/>
            <person name="Siqueira W.J."/>
            <person name="Sommer P."/>
            <person name="Tsai S.M."/>
            <person name="Simpson A.J.G."/>
            <person name="Ferro J.A."/>
            <person name="Camargo L.E.A."/>
            <person name="Kitajima J.P."/>
            <person name="Setubal J.C."/>
            <person name="Van Sluys M.A."/>
        </authorList>
    </citation>
    <scope>NUCLEOTIDE SEQUENCE [LARGE SCALE GENOMIC DNA]</scope>
    <source>
        <strain>Fiocruz L1-130</strain>
    </source>
</reference>
<sequence>MSARRTSREIAVMALYQLELTQPPLKEVLKFKWYDKKTEPEERDFAVSIVNGVVKNQEQIDTLIKKYSKNWDFSRISIVNKAILRLSIYALLYTWEVPKNVTIDEAVELTKEFESEESARFVNGVLDAILKNEIKSDG</sequence>
<comment type="function">
    <text evidence="1">Involved in transcription antitermination. Required for transcription of ribosomal RNA (rRNA) genes. Binds specifically to the boxA antiterminator sequence of the ribosomal RNA (rrn) operons.</text>
</comment>
<comment type="similarity">
    <text evidence="1">Belongs to the NusB family.</text>
</comment>
<comment type="sequence caution" evidence="2">
    <conflict type="erroneous initiation">
        <sequence resource="EMBL-CDS" id="AAS69027"/>
    </conflict>
</comment>
<name>NUSB_LEPIC</name>
<protein>
    <recommendedName>
        <fullName evidence="1">Transcription antitermination protein NusB</fullName>
    </recommendedName>
    <alternativeName>
        <fullName evidence="1">Antitermination factor NusB</fullName>
    </alternativeName>
</protein>
<dbReference type="EMBL" id="AE016823">
    <property type="protein sequence ID" value="AAS69027.1"/>
    <property type="status" value="ALT_INIT"/>
    <property type="molecule type" value="Genomic_DNA"/>
</dbReference>
<dbReference type="RefSeq" id="WP_001276210.1">
    <property type="nucleotide sequence ID" value="NC_005823.1"/>
</dbReference>
<dbReference type="SMR" id="Q72V97"/>
<dbReference type="GeneID" id="61143760"/>
<dbReference type="KEGG" id="lic:LIC_10404"/>
<dbReference type="HOGENOM" id="CLU_087843_3_3_12"/>
<dbReference type="Proteomes" id="UP000007037">
    <property type="component" value="Chromosome I"/>
</dbReference>
<dbReference type="GO" id="GO:0005829">
    <property type="term" value="C:cytosol"/>
    <property type="evidence" value="ECO:0007669"/>
    <property type="project" value="TreeGrafter"/>
</dbReference>
<dbReference type="GO" id="GO:0003723">
    <property type="term" value="F:RNA binding"/>
    <property type="evidence" value="ECO:0007669"/>
    <property type="project" value="UniProtKB-UniRule"/>
</dbReference>
<dbReference type="GO" id="GO:0006353">
    <property type="term" value="P:DNA-templated transcription termination"/>
    <property type="evidence" value="ECO:0007669"/>
    <property type="project" value="UniProtKB-UniRule"/>
</dbReference>
<dbReference type="GO" id="GO:0031564">
    <property type="term" value="P:transcription antitermination"/>
    <property type="evidence" value="ECO:0007669"/>
    <property type="project" value="UniProtKB-KW"/>
</dbReference>
<dbReference type="CDD" id="cd00619">
    <property type="entry name" value="Terminator_NusB"/>
    <property type="match status" value="1"/>
</dbReference>
<dbReference type="FunFam" id="1.10.940.10:FF:000013">
    <property type="entry name" value="Transcription antitermination protein NusB"/>
    <property type="match status" value="1"/>
</dbReference>
<dbReference type="Gene3D" id="1.10.940.10">
    <property type="entry name" value="NusB-like"/>
    <property type="match status" value="1"/>
</dbReference>
<dbReference type="HAMAP" id="MF_00073">
    <property type="entry name" value="NusB"/>
    <property type="match status" value="1"/>
</dbReference>
<dbReference type="InterPro" id="IPR035926">
    <property type="entry name" value="NusB-like_sf"/>
</dbReference>
<dbReference type="InterPro" id="IPR011605">
    <property type="entry name" value="NusB_fam"/>
</dbReference>
<dbReference type="InterPro" id="IPR006027">
    <property type="entry name" value="NusB_RsmB_TIM44"/>
</dbReference>
<dbReference type="NCBIfam" id="TIGR01951">
    <property type="entry name" value="nusB"/>
    <property type="match status" value="1"/>
</dbReference>
<dbReference type="PANTHER" id="PTHR11078:SF3">
    <property type="entry name" value="ANTITERMINATION NUSB DOMAIN-CONTAINING PROTEIN"/>
    <property type="match status" value="1"/>
</dbReference>
<dbReference type="PANTHER" id="PTHR11078">
    <property type="entry name" value="N UTILIZATION SUBSTANCE PROTEIN B-RELATED"/>
    <property type="match status" value="1"/>
</dbReference>
<dbReference type="Pfam" id="PF01029">
    <property type="entry name" value="NusB"/>
    <property type="match status" value="1"/>
</dbReference>
<dbReference type="SUPFAM" id="SSF48013">
    <property type="entry name" value="NusB-like"/>
    <property type="match status" value="1"/>
</dbReference>
<feature type="chain" id="PRO_0000176549" description="Transcription antitermination protein NusB">
    <location>
        <begin position="1"/>
        <end position="138"/>
    </location>
</feature>
<accession>Q72V97</accession>
<keyword id="KW-0694">RNA-binding</keyword>
<keyword id="KW-0804">Transcription</keyword>
<keyword id="KW-0889">Transcription antitermination</keyword>
<keyword id="KW-0805">Transcription regulation</keyword>
<evidence type="ECO:0000255" key="1">
    <source>
        <dbReference type="HAMAP-Rule" id="MF_00073"/>
    </source>
</evidence>
<evidence type="ECO:0000305" key="2"/>
<gene>
    <name evidence="1" type="primary">nusB</name>
    <name type="ordered locus">LIC_10404</name>
</gene>
<proteinExistence type="inferred from homology"/>